<evidence type="ECO:0000250" key="1">
    <source>
        <dbReference type="UniProtKB" id="Q80W92"/>
    </source>
</evidence>
<evidence type="ECO:0000256" key="2">
    <source>
        <dbReference type="SAM" id="MobiDB-lite"/>
    </source>
</evidence>
<evidence type="ECO:0000269" key="3">
    <source>
    </source>
</evidence>
<evidence type="ECO:0000269" key="4">
    <source>
    </source>
</evidence>
<evidence type="ECO:0000269" key="5">
    <source>
    </source>
</evidence>
<evidence type="ECO:0000269" key="6">
    <source>
    </source>
</evidence>
<evidence type="ECO:0000269" key="7">
    <source>
    </source>
</evidence>
<evidence type="ECO:0000269" key="8">
    <source>
    </source>
</evidence>
<evidence type="ECO:0000269" key="9">
    <source>
    </source>
</evidence>
<evidence type="ECO:0000303" key="10">
    <source>
    </source>
</evidence>
<evidence type="ECO:0000305" key="11"/>
<evidence type="ECO:0007744" key="12">
    <source>
        <dbReference type="PDB" id="7K1Y"/>
    </source>
</evidence>
<evidence type="ECO:0007744" key="13">
    <source>
    </source>
</evidence>
<evidence type="ECO:0007744" key="14">
    <source>
    </source>
</evidence>
<evidence type="ECO:0007744" key="15">
    <source>
    </source>
</evidence>
<comment type="function">
    <text evidence="3 5 8">Scaffold protein component of the PI(3,5)P2 regulatory complex which regulates both the synthesis and turnover of phosphatidylinositol 3,5-bisphosphate (PtdIns(3,5)P2). Pentamerizes into a star-shaped structure and nucleates the assembly of the complex. The pentamer binds a single copy each of PIKFYVE and FIG4 and coordinates both PIKfyve kinase activity and FIG4 phosphatase activity, being required to maintain normal levels of phosphatidylinositol 3-phosphate (PtdIns(3)P) and phosphatidylinositol 5-phosphate (PtdIns(5)P) (PubMed:33098764). Plays a role in the biogenesis of endosome carrier vesicles (ECV) / multivesicular bodies (MVB) transport intermediates from early endosomes.</text>
</comment>
<comment type="subunit">
    <text evidence="4 5 6 8">Forms pentamers (PubMed:18950639, PubMed:33098764). Component of the PI(3,5)P2 regulatory complex/PAS complex, at least composed of PIKFYVE, FIG4 and VAC14. VAC14 nucleates the assembly of the complex and serves as a scaffold by pentamerizing into a star-shaped structure, which can bind a single copy each of PIKFYVE and FIG4 and coordinates their activities (PubMed:17556371, PubMed:18950639, PubMed:33098764). Interacts with NOS1 (PubMed:17161399).</text>
</comment>
<comment type="subunit">
    <text evidence="9">(Microbial infection) Interacts with HTLV-1 Tax.</text>
</comment>
<comment type="interaction">
    <interactant intactId="EBI-2107455">
        <id>Q08AM6</id>
    </interactant>
    <interactant intactId="EBI-12318443">
        <id>Q8NFV4-4</id>
        <label>ABHD11</label>
    </interactant>
    <organismsDiffer>false</organismsDiffer>
    <experiments>3</experiments>
</comment>
<comment type="interaction">
    <interactant intactId="EBI-2107455">
        <id>Q08AM6</id>
    </interactant>
    <interactant intactId="EBI-10313831">
        <id>Q9NUB1</id>
        <label>ACSS1</label>
    </interactant>
    <organismsDiffer>false</organismsDiffer>
    <experiments>6</experiments>
</comment>
<comment type="interaction">
    <interactant intactId="EBI-2107455">
        <id>Q08AM6</id>
    </interactant>
    <interactant intactId="EBI-11976299">
        <id>Q5BKX5-3</id>
        <label>ACTMAP</label>
    </interactant>
    <organismsDiffer>false</organismsDiffer>
    <experiments>3</experiments>
</comment>
<comment type="interaction">
    <interactant intactId="EBI-2107455">
        <id>Q08AM6</id>
    </interactant>
    <interactant intactId="EBI-14394829">
        <id>P48728-4</id>
        <label>AMT</label>
    </interactant>
    <organismsDiffer>false</organismsDiffer>
    <experiments>3</experiments>
</comment>
<comment type="interaction">
    <interactant intactId="EBI-2107455">
        <id>Q08AM6</id>
    </interactant>
    <interactant intactId="EBI-948603">
        <id>Q03989</id>
        <label>ARID5A</label>
    </interactant>
    <organismsDiffer>false</organismsDiffer>
    <experiments>3</experiments>
</comment>
<comment type="interaction">
    <interactant intactId="EBI-2107455">
        <id>Q08AM6</id>
    </interactant>
    <interactant intactId="EBI-707573">
        <id>Q8WXK3</id>
        <label>ASB13</label>
    </interactant>
    <organismsDiffer>false</organismsDiffer>
    <experiments>6</experiments>
</comment>
<comment type="interaction">
    <interactant intactId="EBI-2107455">
        <id>Q08AM6</id>
    </interactant>
    <interactant intactId="EBI-12015080">
        <id>Q8WXK3-2</id>
        <label>ASB13</label>
    </interactant>
    <organismsDiffer>false</organismsDiffer>
    <experiments>3</experiments>
</comment>
<comment type="interaction">
    <interactant intactId="EBI-2107455">
        <id>Q08AM6</id>
    </interactant>
    <interactant intactId="EBI-948169">
        <id>P13637</id>
        <label>ATP1A3</label>
    </interactant>
    <organismsDiffer>false</organismsDiffer>
    <experiments>3</experiments>
</comment>
<comment type="interaction">
    <interactant intactId="EBI-2107455">
        <id>Q08AM6</id>
    </interactant>
    <interactant intactId="EBI-16431449">
        <id>A0A0S2Z3D2</id>
        <label>BCL2L1</label>
    </interactant>
    <organismsDiffer>false</organismsDiffer>
    <experiments>3</experiments>
</comment>
<comment type="interaction">
    <interactant intactId="EBI-2107455">
        <id>Q08AM6</id>
    </interactant>
    <interactant intactId="EBI-711810">
        <id>O14503</id>
        <label>BHLHE40</label>
    </interactant>
    <organismsDiffer>false</organismsDiffer>
    <experiments>6</experiments>
</comment>
<comment type="interaction">
    <interactant intactId="EBI-2107455">
        <id>Q08AM6</id>
    </interactant>
    <interactant intactId="EBI-740204">
        <id>Q9H0W9</id>
        <label>C11orf54</label>
    </interactant>
    <organismsDiffer>false</organismsDiffer>
    <experiments>4</experiments>
</comment>
<comment type="interaction">
    <interactant intactId="EBI-2107455">
        <id>Q08AM6</id>
    </interactant>
    <interactant intactId="EBI-12108466">
        <id>Q9H0W9-3</id>
        <label>C11orf54</label>
    </interactant>
    <organismsDiffer>false</organismsDiffer>
    <experiments>3</experiments>
</comment>
<comment type="interaction">
    <interactant intactId="EBI-2107455">
        <id>Q08AM6</id>
    </interactant>
    <interactant intactId="EBI-739879">
        <id>Q53TS8</id>
        <label>C2CD6</label>
    </interactant>
    <organismsDiffer>false</organismsDiffer>
    <experiments>3</experiments>
</comment>
<comment type="interaction">
    <interactant intactId="EBI-2107455">
        <id>Q08AM6</id>
    </interactant>
    <interactant intactId="EBI-10264911">
        <id>Q8N1A6</id>
        <label>C4orf33</label>
    </interactant>
    <organismsDiffer>false</organismsDiffer>
    <experiments>8</experiments>
</comment>
<comment type="interaction">
    <interactant intactId="EBI-2107455">
        <id>Q08AM6</id>
    </interactant>
    <interactant intactId="EBI-516667">
        <id>P29466</id>
        <label>CASP1</label>
    </interactant>
    <organismsDiffer>false</organismsDiffer>
    <experiments>4</experiments>
</comment>
<comment type="interaction">
    <interactant intactId="EBI-2107455">
        <id>Q08AM6</id>
    </interactant>
    <interactant intactId="EBI-12248206">
        <id>P29466-3</id>
        <label>CASP1</label>
    </interactant>
    <organismsDiffer>false</organismsDiffer>
    <experiments>3</experiments>
</comment>
<comment type="interaction">
    <interactant intactId="EBI-2107455">
        <id>Q08AM6</id>
    </interactant>
    <interactant intactId="EBI-10261970">
        <id>Q8IW40</id>
        <label>CCDC103</label>
    </interactant>
    <organismsDiffer>false</organismsDiffer>
    <experiments>8</experiments>
</comment>
<comment type="interaction">
    <interactant intactId="EBI-2107455">
        <id>Q08AM6</id>
    </interactant>
    <interactant intactId="EBI-9257341">
        <id>Q9NNX6</id>
        <label>CD209</label>
    </interactant>
    <organismsDiffer>false</organismsDiffer>
    <experiments>4</experiments>
</comment>
<comment type="interaction">
    <interactant intactId="EBI-2107455">
        <id>Q08AM6</id>
    </interactant>
    <interactant intactId="EBI-12300031">
        <id>Q9NNX6-10</id>
        <label>CD209</label>
    </interactant>
    <organismsDiffer>false</organismsDiffer>
    <experiments>3</experiments>
</comment>
<comment type="interaction">
    <interactant intactId="EBI-2107455">
        <id>Q08AM6</id>
    </interactant>
    <interactant intactId="EBI-10176618">
        <id>Q8N9R6</id>
        <label>CDRT4</label>
    </interactant>
    <organismsDiffer>false</organismsDiffer>
    <experiments>7</experiments>
</comment>
<comment type="interaction">
    <interactant intactId="EBI-2107455">
        <id>Q08AM6</id>
    </interactant>
    <interactant intactId="EBI-747133">
        <id>P27658</id>
        <label>COL8A1</label>
    </interactant>
    <organismsDiffer>false</organismsDiffer>
    <experiments>7</experiments>
</comment>
<comment type="interaction">
    <interactant intactId="EBI-2107455">
        <id>Q08AM6</id>
    </interactant>
    <interactant intactId="EBI-7043337">
        <id>P05813</id>
        <label>CRYBA1</label>
    </interactant>
    <organismsDiffer>false</organismsDiffer>
    <experiments>3</experiments>
</comment>
<comment type="interaction">
    <interactant intactId="EBI-2107455">
        <id>Q08AM6</id>
    </interactant>
    <interactant intactId="EBI-750444">
        <id>P53672</id>
        <label>CRYBA2</label>
    </interactant>
    <organismsDiffer>false</organismsDiffer>
    <experiments>3</experiments>
</comment>
<comment type="interaction">
    <interactant intactId="EBI-2107455">
        <id>Q08AM6</id>
    </interactant>
    <interactant intactId="EBI-12108304">
        <id>Q96AZ1</id>
        <label>EEF1AKMT3</label>
    </interactant>
    <organismsDiffer>false</organismsDiffer>
    <experiments>3</experiments>
</comment>
<comment type="interaction">
    <interactant intactId="EBI-2107455">
        <id>Q08AM6</id>
    </interactant>
    <interactant intactId="EBI-2339219">
        <id>Q08426</id>
        <label>EHHADH</label>
    </interactant>
    <organismsDiffer>false</organismsDiffer>
    <experiments>3</experiments>
</comment>
<comment type="interaction">
    <interactant intactId="EBI-2107455">
        <id>Q08AM6</id>
    </interactant>
    <interactant intactId="EBI-1056162">
        <id>P05198</id>
        <label>EIF2S1</label>
    </interactant>
    <organismsDiffer>false</organismsDiffer>
    <experiments>3</experiments>
</comment>
<comment type="interaction">
    <interactant intactId="EBI-2107455">
        <id>Q08AM6</id>
    </interactant>
    <interactant intactId="EBI-372243">
        <id>P56537</id>
        <label>EIF6</label>
    </interactant>
    <organismsDiffer>false</organismsDiffer>
    <experiments>3</experiments>
</comment>
<comment type="interaction">
    <interactant intactId="EBI-2107455">
        <id>Q08AM6</id>
    </interactant>
    <interactant intactId="EBI-742802">
        <id>Q9Y247</id>
        <label>FAM50B</label>
    </interactant>
    <organismsDiffer>false</organismsDiffer>
    <experiments>3</experiments>
</comment>
<comment type="interaction">
    <interactant intactId="EBI-2107455">
        <id>Q08AM6</id>
    </interactant>
    <interactant intactId="EBI-4290773">
        <id>Q92562</id>
        <label>FIG4</label>
    </interactant>
    <organismsDiffer>false</organismsDiffer>
    <experiments>8</experiments>
</comment>
<comment type="interaction">
    <interactant intactId="EBI-2107455">
        <id>Q08AM6</id>
    </interactant>
    <interactant intactId="EBI-10242151">
        <id>Q53EP0-3</id>
        <label>FNDC3B</label>
    </interactant>
    <organismsDiffer>false</organismsDiffer>
    <experiments>3</experiments>
</comment>
<comment type="interaction">
    <interactant intactId="EBI-2107455">
        <id>Q08AM6</id>
    </interactant>
    <interactant intactId="EBI-8468945">
        <id>Q8TAK5</id>
        <label>GABPB2</label>
    </interactant>
    <organismsDiffer>false</organismsDiffer>
    <experiments>3</experiments>
</comment>
<comment type="interaction">
    <interactant intactId="EBI-2107455">
        <id>Q08AM6</id>
    </interactant>
    <interactant intactId="EBI-16434744">
        <id>A0A0S2Z4I0</id>
        <label>GALT</label>
    </interactant>
    <organismsDiffer>false</organismsDiffer>
    <experiments>3</experiments>
</comment>
<comment type="interaction">
    <interactant intactId="EBI-2107455">
        <id>Q08AM6</id>
    </interactant>
    <interactant intactId="EBI-2857315">
        <id>Q9BRX5</id>
        <label>GINS3</label>
    </interactant>
    <organismsDiffer>false</organismsDiffer>
    <experiments>6</experiments>
</comment>
<comment type="interaction">
    <interactant intactId="EBI-2107455">
        <id>Q08AM6</id>
    </interactant>
    <interactant intactId="EBI-16436971">
        <id>Q9BRX5-3</id>
        <label>GINS3</label>
    </interactant>
    <organismsDiffer>false</organismsDiffer>
    <experiments>3</experiments>
</comment>
<comment type="interaction">
    <interactant intactId="EBI-2107455">
        <id>Q08AM6</id>
    </interactant>
    <interactant intactId="EBI-7251368">
        <id>Q9BZE0</id>
        <label>GLIS2</label>
    </interactant>
    <organismsDiffer>false</organismsDiffer>
    <experiments>3</experiments>
</comment>
<comment type="interaction">
    <interactant intactId="EBI-2107455">
        <id>Q08AM6</id>
    </interactant>
    <interactant intactId="EBI-357130">
        <id>P62873</id>
        <label>GNB1</label>
    </interactant>
    <organismsDiffer>false</organismsDiffer>
    <experiments>3</experiments>
</comment>
<comment type="interaction">
    <interactant intactId="EBI-2107455">
        <id>Q08AM6</id>
    </interactant>
    <interactant intactId="EBI-11957962">
        <id>Q8WUA4-2</id>
        <label>GTF3C2</label>
    </interactant>
    <organismsDiffer>false</organismsDiffer>
    <experiments>3</experiments>
</comment>
<comment type="interaction">
    <interactant intactId="EBI-2107455">
        <id>Q08AM6</id>
    </interactant>
    <interactant intactId="EBI-745201">
        <id>Q9BSH5</id>
        <label>HDHD3</label>
    </interactant>
    <organismsDiffer>false</organismsDiffer>
    <experiments>3</experiments>
</comment>
<comment type="interaction">
    <interactant intactId="EBI-2107455">
        <id>Q08AM6</id>
    </interactant>
    <interactant intactId="EBI-10330115">
        <id>V9HW53</id>
        <label>HEL-S-277</label>
    </interactant>
    <organismsDiffer>false</organismsDiffer>
    <experiments>5</experiments>
</comment>
<comment type="interaction">
    <interactant intactId="EBI-2107455">
        <id>Q08AM6</id>
    </interactant>
    <interactant intactId="EBI-2798841">
        <id>P35680</id>
        <label>HNF1B</label>
    </interactant>
    <organismsDiffer>false</organismsDiffer>
    <experiments>3</experiments>
</comment>
<comment type="interaction">
    <interactant intactId="EBI-2107455">
        <id>Q08AM6</id>
    </interactant>
    <interactant intactId="EBI-466029">
        <id>P42858</id>
        <label>HTT</label>
    </interactant>
    <organismsDiffer>false</organismsDiffer>
    <experiments>3</experiments>
</comment>
<comment type="interaction">
    <interactant intactId="EBI-2107455">
        <id>Q08AM6</id>
    </interactant>
    <interactant intactId="EBI-748258">
        <id>Q5TA45</id>
        <label>INTS11</label>
    </interactant>
    <organismsDiffer>false</organismsDiffer>
    <experiments>3</experiments>
</comment>
<comment type="interaction">
    <interactant intactId="EBI-2107455">
        <id>Q08AM6</id>
    </interactant>
    <interactant intactId="EBI-9090173">
        <id>P0C870</id>
        <label>JMJD7</label>
    </interactant>
    <organismsDiffer>false</organismsDiffer>
    <experiments>3</experiments>
</comment>
<comment type="interaction">
    <interactant intactId="EBI-2107455">
        <id>Q08AM6</id>
    </interactant>
    <interactant intactId="EBI-2796279">
        <id>Q7Z2F6</id>
        <label>KRBOX5</label>
    </interactant>
    <organismsDiffer>false</organismsDiffer>
    <experiments>3</experiments>
</comment>
<comment type="interaction">
    <interactant intactId="EBI-2107455">
        <id>Q08AM6</id>
    </interactant>
    <interactant intactId="EBI-1045341">
        <id>Q9NSB4</id>
        <label>KRT82</label>
    </interactant>
    <organismsDiffer>false</organismsDiffer>
    <experiments>3</experiments>
</comment>
<comment type="interaction">
    <interactant intactId="EBI-2107455">
        <id>Q08AM6</id>
    </interactant>
    <interactant intactId="EBI-11992140">
        <id>Q3LI76</id>
        <label>KRTAP15-1</label>
    </interactant>
    <organismsDiffer>false</organismsDiffer>
    <experiments>3</experiments>
</comment>
<comment type="interaction">
    <interactant intactId="EBI-2107455">
        <id>Q08AM6</id>
    </interactant>
    <interactant intactId="EBI-12020132">
        <id>Q7Z4W3</id>
        <label>KRTAP19-3</label>
    </interactant>
    <organismsDiffer>false</organismsDiffer>
    <experiments>3</experiments>
</comment>
<comment type="interaction">
    <interactant intactId="EBI-2107455">
        <id>Q08AM6</id>
    </interactant>
    <interactant intactId="EBI-1048945">
        <id>Q3LI72</id>
        <label>KRTAP19-5</label>
    </interactant>
    <organismsDiffer>false</organismsDiffer>
    <experiments>6</experiments>
</comment>
<comment type="interaction">
    <interactant intactId="EBI-2107455">
        <id>Q08AM6</id>
    </interactant>
    <interactant intactId="EBI-10241353">
        <id>Q3SYF9</id>
        <label>KRTAP19-7</label>
    </interactant>
    <organismsDiffer>false</organismsDiffer>
    <experiments>6</experiments>
</comment>
<comment type="interaction">
    <interactant intactId="EBI-2107455">
        <id>Q08AM6</id>
    </interactant>
    <interactant intactId="EBI-12111050">
        <id>Q3LI64</id>
        <label>KRTAP6-1</label>
    </interactant>
    <organismsDiffer>false</organismsDiffer>
    <experiments>3</experiments>
</comment>
<comment type="interaction">
    <interactant intactId="EBI-2107455">
        <id>Q08AM6</id>
    </interactant>
    <interactant intactId="EBI-11962084">
        <id>Q3LI66</id>
        <label>KRTAP6-2</label>
    </interactant>
    <organismsDiffer>false</organismsDiffer>
    <experiments>3</experiments>
</comment>
<comment type="interaction">
    <interactant intactId="EBI-2107455">
        <id>Q08AM6</id>
    </interactant>
    <interactant intactId="EBI-10238309">
        <id>Q16773</id>
        <label>KYAT1</label>
    </interactant>
    <organismsDiffer>false</organismsDiffer>
    <experiments>4</experiments>
</comment>
<comment type="interaction">
    <interactant intactId="EBI-2107455">
        <id>Q08AM6</id>
    </interactant>
    <interactant intactId="EBI-9088686">
        <id>Q14847-2</id>
        <label>LASP1</label>
    </interactant>
    <organismsDiffer>false</organismsDiffer>
    <experiments>3</experiments>
</comment>
<comment type="interaction">
    <interactant intactId="EBI-2107455">
        <id>Q08AM6</id>
    </interactant>
    <interactant intactId="EBI-10264791">
        <id>Q8N0U6</id>
        <label>LINC00518</label>
    </interactant>
    <organismsDiffer>false</organismsDiffer>
    <experiments>3</experiments>
</comment>
<comment type="interaction">
    <interactant intactId="EBI-2107455">
        <id>Q08AM6</id>
    </interactant>
    <interactant intactId="EBI-10238012">
        <id>Q16609</id>
        <label>LPAL2</label>
    </interactant>
    <organismsDiffer>false</organismsDiffer>
    <experiments>3</experiments>
</comment>
<comment type="interaction">
    <interactant intactId="EBI-2107455">
        <id>Q08AM6</id>
    </interactant>
    <interactant intactId="EBI-16439278">
        <id>Q6FHY5</id>
        <label>MEOX2</label>
    </interactant>
    <organismsDiffer>false</organismsDiffer>
    <experiments>3</experiments>
</comment>
<comment type="interaction">
    <interactant intactId="EBI-2107455">
        <id>Q08AM6</id>
    </interactant>
    <interactant intactId="EBI-10174029">
        <id>A6NJ78-4</id>
        <label>METTL15</label>
    </interactant>
    <organismsDiffer>false</organismsDiffer>
    <experiments>3</experiments>
</comment>
<comment type="interaction">
    <interactant intactId="EBI-2107455">
        <id>Q08AM6</id>
    </interactant>
    <interactant intactId="EBI-2350461">
        <id>Q15777</id>
        <label>MPPED2</label>
    </interactant>
    <organismsDiffer>false</organismsDiffer>
    <experiments>6</experiments>
</comment>
<comment type="interaction">
    <interactant intactId="EBI-2107455">
        <id>Q08AM6</id>
    </interactant>
    <interactant intactId="EBI-744593">
        <id>Q96QG7</id>
        <label>MTMR9</label>
    </interactant>
    <organismsDiffer>false</organismsDiffer>
    <experiments>3</experiments>
</comment>
<comment type="interaction">
    <interactant intactId="EBI-2107455">
        <id>Q08AM6</id>
    </interactant>
    <interactant intactId="EBI-744402">
        <id>Q9NP98</id>
        <label>MYOZ1</label>
    </interactant>
    <organismsDiffer>false</organismsDiffer>
    <experiments>3</experiments>
</comment>
<comment type="interaction">
    <interactant intactId="EBI-2107455">
        <id>Q08AM6</id>
    </interactant>
    <interactant intactId="EBI-2862306">
        <id>Q6ZNJ1</id>
        <label>NBEAL2</label>
    </interactant>
    <organismsDiffer>false</organismsDiffer>
    <experiments>8</experiments>
</comment>
<comment type="interaction">
    <interactant intactId="EBI-2107455">
        <id>Q08AM6</id>
    </interactant>
    <interactant intactId="EBI-1246261">
        <id>O14561</id>
        <label>NDUFAB1</label>
    </interactant>
    <organismsDiffer>false</organismsDiffer>
    <experiments>3</experiments>
</comment>
<comment type="interaction">
    <interactant intactId="EBI-2107455">
        <id>Q08AM6</id>
    </interactant>
    <interactant intactId="EBI-10311409">
        <id>Q9NPG2</id>
        <label>NGB</label>
    </interactant>
    <organismsDiffer>false</organismsDiffer>
    <experiments>6</experiments>
</comment>
<comment type="interaction">
    <interactant intactId="EBI-2107455">
        <id>Q08AM6</id>
    </interactant>
    <interactant intactId="EBI-7164065">
        <id>P29475</id>
        <label>NOS1</label>
    </interactant>
    <organismsDiffer>false</organismsDiffer>
    <experiments>5</experiments>
</comment>
<comment type="interaction">
    <interactant intactId="EBI-2107455">
        <id>Q08AM6</id>
    </interactant>
    <interactant intactId="EBI-741158">
        <id>Q96HA8</id>
        <label>NTAQ1</label>
    </interactant>
    <organismsDiffer>false</organismsDiffer>
    <experiments>5</experiments>
</comment>
<comment type="interaction">
    <interactant intactId="EBI-2107455">
        <id>Q08AM6</id>
    </interactant>
    <interactant intactId="EBI-10277776">
        <id>Q8WWZ8</id>
        <label>OIT3</label>
    </interactant>
    <organismsDiffer>false</organismsDiffer>
    <experiments>3</experiments>
</comment>
<comment type="interaction">
    <interactant intactId="EBI-2107455">
        <id>Q08AM6</id>
    </interactant>
    <interactant intactId="EBI-12038159">
        <id>Q8NHW6</id>
        <label>OTOS</label>
    </interactant>
    <organismsDiffer>false</organismsDiffer>
    <experiments>3</experiments>
</comment>
<comment type="interaction">
    <interactant intactId="EBI-2107455">
        <id>Q08AM6</id>
    </interactant>
    <interactant intactId="EBI-750589">
        <id>P30039</id>
        <label>PBLD</label>
    </interactant>
    <organismsDiffer>false</organismsDiffer>
    <experiments>3</experiments>
</comment>
<comment type="interaction">
    <interactant intactId="EBI-2107455">
        <id>Q08AM6</id>
    </interactant>
    <interactant intactId="EBI-10253759">
        <id>Q6PIM4</id>
        <label>PCMTD2</label>
    </interactant>
    <organismsDiffer>false</organismsDiffer>
    <experiments>3</experiments>
</comment>
<comment type="interaction">
    <interactant intactId="EBI-2107455">
        <id>Q08AM6</id>
    </interactant>
    <interactant intactId="EBI-716404">
        <id>P16284</id>
        <label>PECAM1</label>
    </interactant>
    <organismsDiffer>false</organismsDiffer>
    <experiments>3</experiments>
</comment>
<comment type="interaction">
    <interactant intactId="EBI-2107455">
        <id>Q08AM6</id>
    </interactant>
    <interactant intactId="EBI-448369">
        <id>Q96FA3</id>
        <label>PELI1</label>
    </interactant>
    <organismsDiffer>false</organismsDiffer>
    <experiments>3</experiments>
</comment>
<comment type="interaction">
    <interactant intactId="EBI-2107455">
        <id>Q08AM6</id>
    </interactant>
    <interactant intactId="EBI-530034">
        <id>O43189</id>
        <label>PHF1</label>
    </interactant>
    <organismsDiffer>false</organismsDiffer>
    <experiments>3</experiments>
</comment>
<comment type="interaction">
    <interactant intactId="EBI-2107455">
        <id>Q08AM6</id>
    </interactant>
    <interactant intactId="EBI-751947">
        <id>Q8IUZ5</id>
        <label>PHYKPL</label>
    </interactant>
    <organismsDiffer>false</organismsDiffer>
    <experiments>4</experiments>
</comment>
<comment type="interaction">
    <interactant intactId="EBI-2107455">
        <id>Q08AM6</id>
    </interactant>
    <interactant intactId="EBI-6138650">
        <id>Q9Y2I7</id>
        <label>PIKFYVE</label>
    </interactant>
    <organismsDiffer>false</organismsDiffer>
    <experiments>7</experiments>
</comment>
<comment type="interaction">
    <interactant intactId="EBI-2107455">
        <id>Q08AM6</id>
    </interactant>
    <interactant intactId="EBI-10175948">
        <id>B3KUN1</id>
        <label>PPP2CA</label>
    </interactant>
    <organismsDiffer>false</organismsDiffer>
    <experiments>5</experiments>
</comment>
<comment type="interaction">
    <interactant intactId="EBI-2107455">
        <id>Q08AM6</id>
    </interactant>
    <interactant intactId="EBI-712311">
        <id>P67775</id>
        <label>PPP2CA</label>
    </interactant>
    <organismsDiffer>false</organismsDiffer>
    <experiments>3</experiments>
</comment>
<comment type="interaction">
    <interactant intactId="EBI-2107455">
        <id>Q08AM6</id>
    </interactant>
    <interactant intactId="EBI-359751">
        <id>O00743</id>
        <label>PPP6C</label>
    </interactant>
    <organismsDiffer>false</organismsDiffer>
    <experiments>3</experiments>
</comment>
<comment type="interaction">
    <interactant intactId="EBI-2107455">
        <id>Q08AM6</id>
    </interactant>
    <interactant intactId="EBI-10297527">
        <id>Q9BSG0</id>
        <label>PRADC1</label>
    </interactant>
    <organismsDiffer>false</organismsDiffer>
    <experiments>3</experiments>
</comment>
<comment type="interaction">
    <interactant intactId="EBI-2107455">
        <id>Q08AM6</id>
    </interactant>
    <interactant intactId="EBI-740924">
        <id>Q9NZ81</id>
        <label>PRR13</label>
    </interactant>
    <organismsDiffer>false</organismsDiffer>
    <experiments>6</experiments>
</comment>
<comment type="interaction">
    <interactant intactId="EBI-2107455">
        <id>Q08AM6</id>
    </interactant>
    <interactant intactId="EBI-10172814">
        <id>P86479</id>
        <label>PRR20C</label>
    </interactant>
    <organismsDiffer>false</organismsDiffer>
    <experiments>3</experiments>
</comment>
<comment type="interaction">
    <interactant intactId="EBI-2107455">
        <id>Q08AM6</id>
    </interactant>
    <interactant intactId="EBI-12754095">
        <id>P86480</id>
        <label>PRR20D</label>
    </interactant>
    <organismsDiffer>false</organismsDiffer>
    <experiments>3</experiments>
</comment>
<comment type="interaction">
    <interactant intactId="EBI-2107455">
        <id>Q08AM6</id>
    </interactant>
    <interactant intactId="EBI-746056">
        <id>O43251</id>
        <label>RBFOX2</label>
    </interactant>
    <organismsDiffer>false</organismsDiffer>
    <experiments>4</experiments>
</comment>
<comment type="interaction">
    <interactant intactId="EBI-2107455">
        <id>Q08AM6</id>
    </interactant>
    <interactant intactId="EBI-12104986">
        <id>O75783</id>
        <label>RHBDL1</label>
    </interactant>
    <organismsDiffer>false</organismsDiffer>
    <experiments>3</experiments>
</comment>
<comment type="interaction">
    <interactant intactId="EBI-2107455">
        <id>Q08AM6</id>
    </interactant>
    <interactant intactId="EBI-372094">
        <id>Q9BQY4</id>
        <label>RHOXF2</label>
    </interactant>
    <organismsDiffer>false</organismsDiffer>
    <experiments>6</experiments>
</comment>
<comment type="interaction">
    <interactant intactId="EBI-2107455">
        <id>Q08AM6</id>
    </interactant>
    <interactant intactId="EBI-10226430">
        <id>Q0D2K3</id>
        <label>RIPPLY1</label>
    </interactant>
    <organismsDiffer>false</organismsDiffer>
    <experiments>3</experiments>
</comment>
<comment type="interaction">
    <interactant intactId="EBI-2107455">
        <id>Q08AM6</id>
    </interactant>
    <interactant intactId="EBI-9027335">
        <id>Q8TDP1</id>
        <label>RNASEH2C</label>
    </interactant>
    <organismsDiffer>false</organismsDiffer>
    <experiments>3</experiments>
</comment>
<comment type="interaction">
    <interactant intactId="EBI-2107455">
        <id>Q08AM6</id>
    </interactant>
    <interactant intactId="EBI-1054572">
        <id>Q96LW2</id>
        <label>RSKR</label>
    </interactant>
    <organismsDiffer>false</organismsDiffer>
    <experiments>3</experiments>
</comment>
<comment type="interaction">
    <interactant intactId="EBI-2107455">
        <id>Q08AM6</id>
    </interactant>
    <interactant intactId="EBI-750381">
        <id>O15389</id>
        <label>SIGLEC5</label>
    </interactant>
    <organismsDiffer>false</organismsDiffer>
    <experiments>6</experiments>
</comment>
<comment type="interaction">
    <interactant intactId="EBI-2107455">
        <id>Q08AM6</id>
    </interactant>
    <interactant intactId="EBI-749970">
        <id>Q53HV7</id>
        <label>SMUG1</label>
    </interactant>
    <organismsDiffer>false</organismsDiffer>
    <experiments>4</experiments>
</comment>
<comment type="interaction">
    <interactant intactId="EBI-2107455">
        <id>Q08AM6</id>
    </interactant>
    <interactant intactId="EBI-12275818">
        <id>Q53HV7-2</id>
        <label>SMUG1</label>
    </interactant>
    <organismsDiffer>false</organismsDiffer>
    <experiments>3</experiments>
</comment>
<comment type="interaction">
    <interactant intactId="EBI-2107455">
        <id>Q08AM6</id>
    </interactant>
    <interactant intactId="EBI-747719">
        <id>Q96H20</id>
        <label>SNF8</label>
    </interactant>
    <organismsDiffer>false</organismsDiffer>
    <experiments>4</experiments>
</comment>
<comment type="interaction">
    <interactant intactId="EBI-2107455">
        <id>Q08AM6</id>
    </interactant>
    <interactant intactId="EBI-743976">
        <id>Q96LM6</id>
        <label>SPMIP9</label>
    </interactant>
    <organismsDiffer>false</organismsDiffer>
    <experiments>3</experiments>
</comment>
<comment type="interaction">
    <interactant intactId="EBI-2107455">
        <id>Q08AM6</id>
    </interactant>
    <interactant intactId="EBI-10248098">
        <id>Q5W111</id>
        <label>SPRYD7</label>
    </interactant>
    <organismsDiffer>false</organismsDiffer>
    <experiments>4</experiments>
</comment>
<comment type="interaction">
    <interactant intactId="EBI-2107455">
        <id>Q08AM6</id>
    </interactant>
    <interactant intactId="EBI-12408727">
        <id>Q5W111-2</id>
        <label>SPRYD7</label>
    </interactant>
    <organismsDiffer>false</organismsDiffer>
    <experiments>3</experiments>
</comment>
<comment type="interaction">
    <interactant intactId="EBI-2107455">
        <id>Q08AM6</id>
    </interactant>
    <interactant intactId="EBI-954696">
        <id>Q8N8B7</id>
        <label>TCEANC</label>
    </interactant>
    <organismsDiffer>false</organismsDiffer>
    <experiments>3</experiments>
</comment>
<comment type="interaction">
    <interactant intactId="EBI-2107455">
        <id>Q08AM6</id>
    </interactant>
    <interactant intactId="EBI-11955057">
        <id>Q8N8B7-2</id>
        <label>TCEANC</label>
    </interactant>
    <organismsDiffer>false</organismsDiffer>
    <experiments>3</experiments>
</comment>
<comment type="interaction">
    <interactant intactId="EBI-2107455">
        <id>Q08AM6</id>
    </interactant>
    <interactant intactId="EBI-2902553">
        <id>Q9NUW8</id>
        <label>TDP1</label>
    </interactant>
    <organismsDiffer>false</organismsDiffer>
    <experiments>3</experiments>
</comment>
<comment type="interaction">
    <interactant intactId="EBI-2107455">
        <id>Q08AM6</id>
    </interactant>
    <interactant intactId="EBI-396540">
        <id>Q12888</id>
        <label>TP53BP1</label>
    </interactant>
    <organismsDiffer>false</organismsDiffer>
    <experiments>6</experiments>
</comment>
<comment type="interaction">
    <interactant intactId="EBI-2107455">
        <id>Q08AM6</id>
    </interactant>
    <interactant intactId="EBI-12068150">
        <id>Q6NVU6</id>
        <label>UFSP1</label>
    </interactant>
    <organismsDiffer>false</organismsDiffer>
    <experiments>3</experiments>
</comment>
<comment type="interaction">
    <interactant intactId="EBI-2107455">
        <id>Q08AM6</id>
    </interactant>
    <interactant intactId="EBI-2107455">
        <id>Q08AM6</id>
        <label>VAC14</label>
    </interactant>
    <organismsDiffer>false</organismsDiffer>
    <experiments>5</experiments>
</comment>
<comment type="interaction">
    <interactant intactId="EBI-2107455">
        <id>Q08AM6</id>
    </interactant>
    <interactant intactId="EBI-10191303">
        <id>O95231</id>
        <label>VENTX</label>
    </interactant>
    <organismsDiffer>false</organismsDiffer>
    <experiments>3</experiments>
</comment>
<comment type="interaction">
    <interactant intactId="EBI-2107455">
        <id>Q08AM6</id>
    </interactant>
    <interactant intactId="EBI-10254232">
        <id>Q6RSH7</id>
        <label>VHLL</label>
    </interactant>
    <organismsDiffer>false</organismsDiffer>
    <experiments>3</experiments>
</comment>
<comment type="interaction">
    <interactant intactId="EBI-2107455">
        <id>Q08AM6</id>
    </interactant>
    <interactant intactId="EBI-353844">
        <id>P08670</id>
        <label>VIM</label>
    </interactant>
    <organismsDiffer>false</organismsDiffer>
    <experiments>3</experiments>
</comment>
<comment type="interaction">
    <interactant intactId="EBI-2107455">
        <id>Q08AM6</id>
    </interactant>
    <interactant intactId="EBI-7705033">
        <id>Q9BRX9</id>
        <label>WDR83</label>
    </interactant>
    <organismsDiffer>false</organismsDiffer>
    <experiments>3</experiments>
</comment>
<comment type="interaction">
    <interactant intactId="EBI-2107455">
        <id>Q08AM6</id>
    </interactant>
    <interactant intactId="EBI-2563542">
        <id>Q9BUR4</id>
        <label>WRAP53</label>
    </interactant>
    <organismsDiffer>false</organismsDiffer>
    <experiments>3</experiments>
</comment>
<comment type="interaction">
    <interactant intactId="EBI-2107455">
        <id>Q08AM6</id>
    </interactant>
    <interactant intactId="EBI-2859943">
        <id>Q6ZSB9</id>
        <label>ZBTB49</label>
    </interactant>
    <organismsDiffer>false</organismsDiffer>
    <experiments>3</experiments>
</comment>
<comment type="interaction">
    <interactant intactId="EBI-2107455">
        <id>Q08AM6</id>
    </interactant>
    <interactant intactId="EBI-16429747">
        <id>A0A0S2Z6A9</id>
        <label>ZCWPW1</label>
    </interactant>
    <organismsDiffer>false</organismsDiffer>
    <experiments>3</experiments>
</comment>
<comment type="interaction">
    <interactant intactId="EBI-2107455">
        <id>Q08AM6</id>
    </interactant>
    <interactant intactId="EBI-10264496">
        <id>Q8IZ26</id>
        <label>ZNF34</label>
    </interactant>
    <organismsDiffer>false</organismsDiffer>
    <experiments>4</experiments>
</comment>
<comment type="subcellular location">
    <subcellularLocation>
        <location evidence="3 5">Endosome membrane</location>
    </subcellularLocation>
    <subcellularLocation>
        <location evidence="1">Microsome membrane</location>
    </subcellularLocation>
    <text>Mainly associated with membranes of the late endocytic pathway.</text>
</comment>
<comment type="alternative products">
    <event type="alternative splicing"/>
    <isoform>
        <id>Q08AM6-1</id>
        <name>1</name>
        <sequence type="displayed"/>
    </isoform>
    <isoform>
        <id>Q08AM6-2</id>
        <name>2</name>
        <sequence type="described" ref="VSP_056097"/>
    </isoform>
</comment>
<comment type="tissue specificity">
    <text evidence="9">Ubiquitously expressed.</text>
</comment>
<comment type="domain">
    <text evidence="6 8">The C-terminal domain (residues 523-782) mediates pentameric interactions and is necessary for the formation and maintenance of the PI(3,5)P2 regulatory complex.</text>
</comment>
<comment type="disease" evidence="7">
    <disease id="DI-04778">
        <name>Striatonigral degeneration, childhood-onset</name>
        <acronym>SNDC</acronym>
        <description>An autosomal recessive neurological disorder characterized by sudden childhood onset of developmental regression. Affected children develop impaired movements with dystonia, progressively become non-ambulatory and non-verbal, and exhibit striatal abnormalities on MRI.</description>
        <dbReference type="MIM" id="617054"/>
    </disease>
    <text>The disease is caused by variants affecting the gene represented in this entry.</text>
</comment>
<comment type="similarity">
    <text evidence="11">Belongs to the VAC14 family.</text>
</comment>
<comment type="sequence caution" evidence="11">
    <conflict type="miscellaneous discrepancy">
        <sequence resource="EMBL-CDS" id="AAB03813"/>
    </conflict>
    <text>Unknown C-terminal region.</text>
</comment>
<comment type="sequence caution" evidence="11">
    <conflict type="erroneous initiation">
        <sequence resource="EMBL-CDS" id="BAB15145"/>
    </conflict>
    <text>Truncated N-terminus.</text>
</comment>
<accession>Q08AM6</accession>
<accession>B3KPJ5</accession>
<accession>B3KSM8</accession>
<accession>Q13174</accession>
<accession>Q6IA12</accession>
<accession>Q7L4Y1</accession>
<accession>Q9BW96</accession>
<accession>Q9H6V6</accession>
<proteinExistence type="evidence at protein level"/>
<reference key="1">
    <citation type="journal article" date="2004" name="Nat. Genet.">
        <title>Complete sequencing and characterization of 21,243 full-length human cDNAs.</title>
        <authorList>
            <person name="Ota T."/>
            <person name="Suzuki Y."/>
            <person name="Nishikawa T."/>
            <person name="Otsuki T."/>
            <person name="Sugiyama T."/>
            <person name="Irie R."/>
            <person name="Wakamatsu A."/>
            <person name="Hayashi K."/>
            <person name="Sato H."/>
            <person name="Nagai K."/>
            <person name="Kimura K."/>
            <person name="Makita H."/>
            <person name="Sekine M."/>
            <person name="Obayashi M."/>
            <person name="Nishi T."/>
            <person name="Shibahara T."/>
            <person name="Tanaka T."/>
            <person name="Ishii S."/>
            <person name="Yamamoto J."/>
            <person name="Saito K."/>
            <person name="Kawai Y."/>
            <person name="Isono Y."/>
            <person name="Nakamura Y."/>
            <person name="Nagahari K."/>
            <person name="Murakami K."/>
            <person name="Yasuda T."/>
            <person name="Iwayanagi T."/>
            <person name="Wagatsuma M."/>
            <person name="Shiratori A."/>
            <person name="Sudo H."/>
            <person name="Hosoiri T."/>
            <person name="Kaku Y."/>
            <person name="Kodaira H."/>
            <person name="Kondo H."/>
            <person name="Sugawara M."/>
            <person name="Takahashi M."/>
            <person name="Kanda K."/>
            <person name="Yokoi T."/>
            <person name="Furuya T."/>
            <person name="Kikkawa E."/>
            <person name="Omura Y."/>
            <person name="Abe K."/>
            <person name="Kamihara K."/>
            <person name="Katsuta N."/>
            <person name="Sato K."/>
            <person name="Tanikawa M."/>
            <person name="Yamazaki M."/>
            <person name="Ninomiya K."/>
            <person name="Ishibashi T."/>
            <person name="Yamashita H."/>
            <person name="Murakawa K."/>
            <person name="Fujimori K."/>
            <person name="Tanai H."/>
            <person name="Kimata M."/>
            <person name="Watanabe M."/>
            <person name="Hiraoka S."/>
            <person name="Chiba Y."/>
            <person name="Ishida S."/>
            <person name="Ono Y."/>
            <person name="Takiguchi S."/>
            <person name="Watanabe S."/>
            <person name="Yosida M."/>
            <person name="Hotuta T."/>
            <person name="Kusano J."/>
            <person name="Kanehori K."/>
            <person name="Takahashi-Fujii A."/>
            <person name="Hara H."/>
            <person name="Tanase T.-O."/>
            <person name="Nomura Y."/>
            <person name="Togiya S."/>
            <person name="Komai F."/>
            <person name="Hara R."/>
            <person name="Takeuchi K."/>
            <person name="Arita M."/>
            <person name="Imose N."/>
            <person name="Musashino K."/>
            <person name="Yuuki H."/>
            <person name="Oshima A."/>
            <person name="Sasaki N."/>
            <person name="Aotsuka S."/>
            <person name="Yoshikawa Y."/>
            <person name="Matsunawa H."/>
            <person name="Ichihara T."/>
            <person name="Shiohata N."/>
            <person name="Sano S."/>
            <person name="Moriya S."/>
            <person name="Momiyama H."/>
            <person name="Satoh N."/>
            <person name="Takami S."/>
            <person name="Terashima Y."/>
            <person name="Suzuki O."/>
            <person name="Nakagawa S."/>
            <person name="Senoh A."/>
            <person name="Mizoguchi H."/>
            <person name="Goto Y."/>
            <person name="Shimizu F."/>
            <person name="Wakebe H."/>
            <person name="Hishigaki H."/>
            <person name="Watanabe T."/>
            <person name="Sugiyama A."/>
            <person name="Takemoto M."/>
            <person name="Kawakami B."/>
            <person name="Yamazaki M."/>
            <person name="Watanabe K."/>
            <person name="Kumagai A."/>
            <person name="Itakura S."/>
            <person name="Fukuzumi Y."/>
            <person name="Fujimori Y."/>
            <person name="Komiyama M."/>
            <person name="Tashiro H."/>
            <person name="Tanigami A."/>
            <person name="Fujiwara T."/>
            <person name="Ono T."/>
            <person name="Yamada K."/>
            <person name="Fujii Y."/>
            <person name="Ozaki K."/>
            <person name="Hirao M."/>
            <person name="Ohmori Y."/>
            <person name="Kawabata A."/>
            <person name="Hikiji T."/>
            <person name="Kobatake N."/>
            <person name="Inagaki H."/>
            <person name="Ikema Y."/>
            <person name="Okamoto S."/>
            <person name="Okitani R."/>
            <person name="Kawakami T."/>
            <person name="Noguchi S."/>
            <person name="Itoh T."/>
            <person name="Shigeta K."/>
            <person name="Senba T."/>
            <person name="Matsumura K."/>
            <person name="Nakajima Y."/>
            <person name="Mizuno T."/>
            <person name="Morinaga M."/>
            <person name="Sasaki M."/>
            <person name="Togashi T."/>
            <person name="Oyama M."/>
            <person name="Hata H."/>
            <person name="Watanabe M."/>
            <person name="Komatsu T."/>
            <person name="Mizushima-Sugano J."/>
            <person name="Satoh T."/>
            <person name="Shirai Y."/>
            <person name="Takahashi Y."/>
            <person name="Nakagawa K."/>
            <person name="Okumura K."/>
            <person name="Nagase T."/>
            <person name="Nomura N."/>
            <person name="Kikuchi H."/>
            <person name="Masuho Y."/>
            <person name="Yamashita R."/>
            <person name="Nakai K."/>
            <person name="Yada T."/>
            <person name="Nakamura Y."/>
            <person name="Ohara O."/>
            <person name="Isogai T."/>
            <person name="Sugano S."/>
        </authorList>
    </citation>
    <scope>NUCLEOTIDE SEQUENCE [LARGE SCALE MRNA] (ISOFORMS 1 AND 2)</scope>
    <source>
        <tissue>Trachea</tissue>
    </source>
</reference>
<reference key="2">
    <citation type="journal article" date="2004" name="Nature">
        <title>The sequence and analysis of duplication-rich human chromosome 16.</title>
        <authorList>
            <person name="Martin J."/>
            <person name="Han C."/>
            <person name="Gordon L.A."/>
            <person name="Terry A."/>
            <person name="Prabhakar S."/>
            <person name="She X."/>
            <person name="Xie G."/>
            <person name="Hellsten U."/>
            <person name="Chan Y.M."/>
            <person name="Altherr M."/>
            <person name="Couronne O."/>
            <person name="Aerts A."/>
            <person name="Bajorek E."/>
            <person name="Black S."/>
            <person name="Blumer H."/>
            <person name="Branscomb E."/>
            <person name="Brown N.C."/>
            <person name="Bruno W.J."/>
            <person name="Buckingham J.M."/>
            <person name="Callen D.F."/>
            <person name="Campbell C.S."/>
            <person name="Campbell M.L."/>
            <person name="Campbell E.W."/>
            <person name="Caoile C."/>
            <person name="Challacombe J.F."/>
            <person name="Chasteen L.A."/>
            <person name="Chertkov O."/>
            <person name="Chi H.C."/>
            <person name="Christensen M."/>
            <person name="Clark L.M."/>
            <person name="Cohn J.D."/>
            <person name="Denys M."/>
            <person name="Detter J.C."/>
            <person name="Dickson M."/>
            <person name="Dimitrijevic-Bussod M."/>
            <person name="Escobar J."/>
            <person name="Fawcett J.J."/>
            <person name="Flowers D."/>
            <person name="Fotopulos D."/>
            <person name="Glavina T."/>
            <person name="Gomez M."/>
            <person name="Gonzales E."/>
            <person name="Goodstein D."/>
            <person name="Goodwin L.A."/>
            <person name="Grady D.L."/>
            <person name="Grigoriev I."/>
            <person name="Groza M."/>
            <person name="Hammon N."/>
            <person name="Hawkins T."/>
            <person name="Haydu L."/>
            <person name="Hildebrand C.E."/>
            <person name="Huang W."/>
            <person name="Israni S."/>
            <person name="Jett J."/>
            <person name="Jewett P.B."/>
            <person name="Kadner K."/>
            <person name="Kimball H."/>
            <person name="Kobayashi A."/>
            <person name="Krawczyk M.-C."/>
            <person name="Leyba T."/>
            <person name="Longmire J.L."/>
            <person name="Lopez F."/>
            <person name="Lou Y."/>
            <person name="Lowry S."/>
            <person name="Ludeman T."/>
            <person name="Manohar C.F."/>
            <person name="Mark G.A."/>
            <person name="McMurray K.L."/>
            <person name="Meincke L.J."/>
            <person name="Morgan J."/>
            <person name="Moyzis R.K."/>
            <person name="Mundt M.O."/>
            <person name="Munk A.C."/>
            <person name="Nandkeshwar R.D."/>
            <person name="Pitluck S."/>
            <person name="Pollard M."/>
            <person name="Predki P."/>
            <person name="Parson-Quintana B."/>
            <person name="Ramirez L."/>
            <person name="Rash S."/>
            <person name="Retterer J."/>
            <person name="Ricke D.O."/>
            <person name="Robinson D.L."/>
            <person name="Rodriguez A."/>
            <person name="Salamov A."/>
            <person name="Saunders E.H."/>
            <person name="Scott D."/>
            <person name="Shough T."/>
            <person name="Stallings R.L."/>
            <person name="Stalvey M."/>
            <person name="Sutherland R.D."/>
            <person name="Tapia R."/>
            <person name="Tesmer J.G."/>
            <person name="Thayer N."/>
            <person name="Thompson L.S."/>
            <person name="Tice H."/>
            <person name="Torney D.C."/>
            <person name="Tran-Gyamfi M."/>
            <person name="Tsai M."/>
            <person name="Ulanovsky L.E."/>
            <person name="Ustaszewska A."/>
            <person name="Vo N."/>
            <person name="White P.S."/>
            <person name="Williams A.L."/>
            <person name="Wills P.L."/>
            <person name="Wu J.-R."/>
            <person name="Wu K."/>
            <person name="Yang J."/>
            <person name="DeJong P."/>
            <person name="Bruce D."/>
            <person name="Doggett N.A."/>
            <person name="Deaven L."/>
            <person name="Schmutz J."/>
            <person name="Grimwood J."/>
            <person name="Richardson P."/>
            <person name="Rokhsar D.S."/>
            <person name="Eichler E.E."/>
            <person name="Gilna P."/>
            <person name="Lucas S.M."/>
            <person name="Myers R.M."/>
            <person name="Rubin E.M."/>
            <person name="Pennacchio L.A."/>
        </authorList>
    </citation>
    <scope>NUCLEOTIDE SEQUENCE [LARGE SCALE GENOMIC DNA]</scope>
</reference>
<reference key="3">
    <citation type="journal article" date="2004" name="Genome Res.">
        <title>The status, quality, and expansion of the NIH full-length cDNA project: the Mammalian Gene Collection (MGC).</title>
        <authorList>
            <consortium name="The MGC Project Team"/>
        </authorList>
    </citation>
    <scope>NUCLEOTIDE SEQUENCE [LARGE SCALE MRNA] (ISOFORM 1)</scope>
    <source>
        <tissue>Brain</tissue>
        <tissue>Lung</tissue>
    </source>
</reference>
<reference key="4">
    <citation type="journal article" date="1996" name="Biochim. Biophys. Acta">
        <title>Isolation of a cDNA clone, TRX encoding a human T-cell lymphotrophic virus type-I Tax1 binding protein.</title>
        <authorList>
            <person name="Mireskandari A."/>
            <person name="Reid R.L."/>
            <person name="Kashanchi F."/>
            <person name="Dittmer J."/>
            <person name="Li W.B."/>
            <person name="Brady J.N."/>
        </authorList>
    </citation>
    <scope>NUCLEOTIDE SEQUENCE [MRNA] OF 244-366 (ISOFORM 1)</scope>
    <scope>TISSUE SPECIFICITY</scope>
    <scope>INTERACTION WITH HTLV-1 PROTEIN TAX (MICROBIAL INFECTION)</scope>
</reference>
<reference key="5">
    <citation type="submission" date="2004-06" db="EMBL/GenBank/DDBJ databases">
        <title>Cloning of human full open reading frames in Gateway(TM) system entry vector (pDONR201).</title>
        <authorList>
            <person name="Ebert L."/>
            <person name="Schick M."/>
            <person name="Neubert P."/>
            <person name="Schatten R."/>
            <person name="Henze S."/>
            <person name="Korn B."/>
        </authorList>
    </citation>
    <scope>NUCLEOTIDE SEQUENCE [LARGE SCALE MRNA] OF 259-782 (ISOFORM 1)</scope>
</reference>
<reference key="6">
    <citation type="journal article" date="2004" name="Mol. Cell. Biol.">
        <title>A mammalian ortholog of Saccharomyces cerevisiae Vac14 that associates with and up-regulates PIKfyve phosphoinositide 5-kinase activity.</title>
        <authorList>
            <person name="Sbrissa D."/>
            <person name="Ikonomov O.C."/>
            <person name="Strakova J."/>
            <person name="Dondapati R."/>
            <person name="Mlak K."/>
            <person name="Deeb R."/>
            <person name="Silver R."/>
            <person name="Shisheva A."/>
        </authorList>
    </citation>
    <scope>FUNCTION</scope>
    <scope>SUBCELLULAR LOCATION</scope>
</reference>
<reference key="7">
    <citation type="journal article" date="2006" name="FEBS Lett.">
        <title>Binding of Vac14 to neuronal nitric oxide synthase: Characterisation of a new internal PDZ-recognition motif.</title>
        <authorList>
            <person name="Lemaire J.F."/>
            <person name="McPherson P.S."/>
        </authorList>
    </citation>
    <scope>INTERACTION WITH NOS1</scope>
    <scope>MUTAGENESIS OF GLY-773; ASP-774; LEU-776; ASP-777; 780-VAL--LEU-782 AND LEU-782</scope>
</reference>
<reference key="8">
    <citation type="journal article" date="2007" name="J. Biol. Chem.">
        <title>Core protein machinery for mammalian phosphatidylinositol 3,5-bisphosphate synthesis and turnover that regulates the progression of endosomal transport. Novel Sac phosphatase joins the ArPIKfyve-PIKfyve complex.</title>
        <authorList>
            <person name="Sbrissa D."/>
            <person name="Ikonomov O.C."/>
            <person name="Fu Z."/>
            <person name="Ijuin T."/>
            <person name="Gruenberg J."/>
            <person name="Takenawa T."/>
            <person name="Shisheva A."/>
        </authorList>
    </citation>
    <scope>FUNCTION</scope>
    <scope>SUBCELLULAR LOCATION</scope>
    <scope>IDENTIFICATION IN THE PI(3,5)P2 REGULATORY COMPLEX</scope>
</reference>
<reference key="9">
    <citation type="journal article" date="2008" name="J. Mol. Biol.">
        <title>ArPIKfyve homomeric and heteromeric interactions scaffold PIKfyve and Sac3 in a complex to promote PIKfyve activity and functionality.</title>
        <authorList>
            <person name="Sbrissa D."/>
            <person name="Ikonomov O.C."/>
            <person name="Fenner H."/>
            <person name="Shisheva A."/>
        </authorList>
    </citation>
    <scope>SUBUNIT</scope>
    <scope>IDENTIFICATION IN THE PI(3,5)P2 REGULATORY COMPLEX</scope>
    <scope>DOMAIN</scope>
</reference>
<reference key="10">
    <citation type="journal article" date="2008" name="Mol. Cell">
        <title>Kinase-selective enrichment enables quantitative phosphoproteomics of the kinome across the cell cycle.</title>
        <authorList>
            <person name="Daub H."/>
            <person name="Olsen J.V."/>
            <person name="Bairlein M."/>
            <person name="Gnad F."/>
            <person name="Oppermann F.S."/>
            <person name="Korner R."/>
            <person name="Greff Z."/>
            <person name="Keri G."/>
            <person name="Stemmann O."/>
            <person name="Mann M."/>
        </authorList>
    </citation>
    <scope>PHOSPHORYLATION [LARGE SCALE ANALYSIS] AT THR-11 AND THR-499</scope>
    <scope>IDENTIFICATION BY MASS SPECTROMETRY [LARGE SCALE ANALYSIS]</scope>
    <source>
        <tissue>Cervix carcinoma</tissue>
    </source>
</reference>
<reference key="11">
    <citation type="journal article" date="2008" name="Proc. Natl. Acad. Sci. U.S.A.">
        <title>A quantitative atlas of mitotic phosphorylation.</title>
        <authorList>
            <person name="Dephoure N."/>
            <person name="Zhou C."/>
            <person name="Villen J."/>
            <person name="Beausoleil S.A."/>
            <person name="Bakalarski C.E."/>
            <person name="Elledge S.J."/>
            <person name="Gygi S.P."/>
        </authorList>
    </citation>
    <scope>IDENTIFICATION BY MASS SPECTROMETRY [LARGE SCALE ANALYSIS]</scope>
    <source>
        <tissue>Cervix carcinoma</tissue>
    </source>
</reference>
<reference key="12">
    <citation type="journal article" date="2009" name="Mol. Cell. Proteomics">
        <title>Large-scale proteomics analysis of the human kinome.</title>
        <authorList>
            <person name="Oppermann F.S."/>
            <person name="Gnad F."/>
            <person name="Olsen J.V."/>
            <person name="Hornberger R."/>
            <person name="Greff Z."/>
            <person name="Keri G."/>
            <person name="Mann M."/>
            <person name="Daub H."/>
        </authorList>
    </citation>
    <scope>IDENTIFICATION BY MASS SPECTROMETRY [LARGE SCALE ANALYSIS]</scope>
</reference>
<reference key="13">
    <citation type="journal article" date="2010" name="Sci. Signal.">
        <title>Quantitative phosphoproteomics reveals widespread full phosphorylation site occupancy during mitosis.</title>
        <authorList>
            <person name="Olsen J.V."/>
            <person name="Vermeulen M."/>
            <person name="Santamaria A."/>
            <person name="Kumar C."/>
            <person name="Miller M.L."/>
            <person name="Jensen L.J."/>
            <person name="Gnad F."/>
            <person name="Cox J."/>
            <person name="Jensen T.S."/>
            <person name="Nigg E.A."/>
            <person name="Brunak S."/>
            <person name="Mann M."/>
        </authorList>
    </citation>
    <scope>IDENTIFICATION BY MASS SPECTROMETRY [LARGE SCALE ANALYSIS]</scope>
    <source>
        <tissue>Cervix carcinoma</tissue>
    </source>
</reference>
<reference key="14">
    <citation type="journal article" date="2011" name="BMC Syst. Biol.">
        <title>Initial characterization of the human central proteome.</title>
        <authorList>
            <person name="Burkard T.R."/>
            <person name="Planyavsky M."/>
            <person name="Kaupe I."/>
            <person name="Breitwieser F.P."/>
            <person name="Buerckstuemmer T."/>
            <person name="Bennett K.L."/>
            <person name="Superti-Furga G."/>
            <person name="Colinge J."/>
        </authorList>
    </citation>
    <scope>IDENTIFICATION BY MASS SPECTROMETRY [LARGE SCALE ANALYSIS]</scope>
</reference>
<reference key="15">
    <citation type="journal article" date="2012" name="Proc. Natl. Acad. Sci. U.S.A.">
        <title>N-terminal acetylome analyses and functional insights of the N-terminal acetyltransferase NatB.</title>
        <authorList>
            <person name="Van Damme P."/>
            <person name="Lasa M."/>
            <person name="Polevoda B."/>
            <person name="Gazquez C."/>
            <person name="Elosegui-Artola A."/>
            <person name="Kim D.S."/>
            <person name="De Juan-Pardo E."/>
            <person name="Demeyer K."/>
            <person name="Hole K."/>
            <person name="Larrea E."/>
            <person name="Timmerman E."/>
            <person name="Prieto J."/>
            <person name="Arnesen T."/>
            <person name="Sherman F."/>
            <person name="Gevaert K."/>
            <person name="Aldabe R."/>
        </authorList>
    </citation>
    <scope>ACETYLATION [LARGE SCALE ANALYSIS] AT MET-1</scope>
    <scope>IDENTIFICATION BY MASS SPECTROMETRY [LARGE SCALE ANALYSIS]</scope>
</reference>
<reference key="16">
    <citation type="journal article" date="2013" name="J. Proteome Res.">
        <title>Toward a comprehensive characterization of a human cancer cell phosphoproteome.</title>
        <authorList>
            <person name="Zhou H."/>
            <person name="Di Palma S."/>
            <person name="Preisinger C."/>
            <person name="Peng M."/>
            <person name="Polat A.N."/>
            <person name="Heck A.J."/>
            <person name="Mohammed S."/>
        </authorList>
    </citation>
    <scope>PHOSPHORYLATION [LARGE SCALE ANALYSIS] AT SER-517 AND SER-743</scope>
    <scope>IDENTIFICATION BY MASS SPECTROMETRY [LARGE SCALE ANALYSIS]</scope>
    <source>
        <tissue>Erythroleukemia</tissue>
    </source>
</reference>
<reference key="17">
    <citation type="journal article" date="2014" name="J. Proteomics">
        <title>An enzyme assisted RP-RPLC approach for in-depth analysis of human liver phosphoproteome.</title>
        <authorList>
            <person name="Bian Y."/>
            <person name="Song C."/>
            <person name="Cheng K."/>
            <person name="Dong M."/>
            <person name="Wang F."/>
            <person name="Huang J."/>
            <person name="Sun D."/>
            <person name="Wang L."/>
            <person name="Ye M."/>
            <person name="Zou H."/>
        </authorList>
    </citation>
    <scope>IDENTIFICATION BY MASS SPECTROMETRY [LARGE SCALE ANALYSIS]</scope>
    <source>
        <tissue>Liver</tissue>
    </source>
</reference>
<reference evidence="12" key="18">
    <citation type="journal article" date="2020" name="Mol. Cell">
        <title>Insights into Lysosomal PI(3,5)P2 Homeostasis from a Structural-Biochemical Analysis of the PIKfyve Lipid Kinase Complex.</title>
        <authorList>
            <person name="Lees J.A."/>
            <person name="Li P."/>
            <person name="Kumar N."/>
            <person name="Weisman L.S."/>
            <person name="Reinisch K.M."/>
        </authorList>
    </citation>
    <scope>STRUCTURE BY ELECTRON MICROSCOPY (5.25 ANGSTROMS) OF 1-782</scope>
    <scope>FUNCTION</scope>
    <scope>SUBUNIT</scope>
    <scope>IDENTIFICATION IN THE PI(3,5)P2 REGULATORY COMPLEX</scope>
</reference>
<reference key="19">
    <citation type="journal article" date="2016" name="Am. J. Hum. Genet.">
        <title>Biallelic mutations of VAC14 in pediatric-onset neurological disease.</title>
        <authorList>
            <person name="Lenk G.M."/>
            <person name="Szymanska K."/>
            <person name="Debska-Vielhaber G."/>
            <person name="Rydzanicz M."/>
            <person name="Walczak A."/>
            <person name="Bekiesinska-Figatowska M."/>
            <person name="Vielhaber S."/>
            <person name="Hallmann K."/>
            <person name="Stawinski P."/>
            <person name="Buehring S."/>
            <person name="Hsu D.A."/>
            <person name="Kunz W.S."/>
            <person name="Meisler M.H."/>
            <person name="Ploski R."/>
        </authorList>
    </citation>
    <scope>INVOLVEMENT IN SNDC</scope>
    <scope>VARIANTS SNDC LEU-424; SER-582 AND LEU-583</scope>
</reference>
<sequence length="782" mass="87973">MNPEKDFAPLTPNIVRALNDKLYEKRKVAALEIEKLVREFVAQNNTVQIKHVIQTLSQEFALSQHPHSRKGGLIGLAACSIALGKDSGLYLKELIEPVLTCFNDADSRLRYYACEALYNIVKVARGAVLPHFNVLFDGLSKLAADPDPNVKSGSELLDRLLKDIVTESNKFDLVSFIPLLRERIYSNNQYARQFIISWILVLESVPDINLLDYLPEILDGLFQILGDNGKEIRKMCEVVLGEFLKEIKKNPSSVKFAEMANILVIHCQTTDDLIQLTAMCWMREFIQLAGRVMLPYSSGILTAVLPCLAYDDRKKSIKEVANVCNQSLMKLVTPEDDELDELRPGQRQAEPTPDDALPKQEGTASGGPDGSCDSSFSSGISVFTAASTERAPVTLHLDGIVQVLNCHLSDTAIGMMTRIAVLKWLYHLYIKTPRKMFRHTDSLFPILLQTLSDESDEVILKDLEVLAEIASSPAGQTDDPGPLDGPDLQASHSELQVPTPGRAGLLNTSGTKGLECSPSTPTMNSYFYKFMINLLKRFSSERKLLEVRGPFIIRQLCLLLNAENIFHSMADILLREEDLKFASTMVHALNTILLTSTELFQLRNQLKDLKTLESQNLFCCLYRSWCHNPVTTVSLCFLTQNYRHAYDLIQKFGDLEVTVDFLAEVDKLVQLIECPIFTYLRLQLLDVKNNPYLIKALYGLLMLLPQSSAFQLLSHRLQCVPNPELLQTEDSLKAAPKSQKADSPSIDYAELLQHFEKVQNKHLEVRHQRSGRGDHLDRRVVL</sequence>
<feature type="chain" id="PRO_0000300485" description="Protein VAC14 homolog">
    <location>
        <begin position="1"/>
        <end position="782"/>
    </location>
</feature>
<feature type="repeat" description="HEAT 1">
    <location>
        <begin position="5"/>
        <end position="42"/>
    </location>
</feature>
<feature type="repeat" description="HEAT 2">
    <location>
        <begin position="89"/>
        <end position="126"/>
    </location>
</feature>
<feature type="repeat" description="HEAT 3">
    <location>
        <begin position="171"/>
        <end position="208"/>
    </location>
</feature>
<feature type="repeat" description="HEAT 4">
    <location>
        <begin position="212"/>
        <end position="249"/>
    </location>
</feature>
<feature type="repeat" description="HEAT 5">
    <location>
        <begin position="438"/>
        <end position="475"/>
    </location>
</feature>
<feature type="repeat" description="HEAT 6">
    <location>
        <begin position="560"/>
        <end position="598"/>
    </location>
</feature>
<feature type="region of interest" description="Disordered" evidence="2">
    <location>
        <begin position="335"/>
        <end position="372"/>
    </location>
</feature>
<feature type="region of interest" description="Disordered" evidence="2">
    <location>
        <begin position="471"/>
        <end position="517"/>
    </location>
</feature>
<feature type="region of interest" description="Mediates interaction with the PDZ domain of NOS1">
    <location>
        <begin position="773"/>
        <end position="777"/>
    </location>
</feature>
<feature type="compositionally biased region" description="Low complexity" evidence="2">
    <location>
        <begin position="478"/>
        <end position="488"/>
    </location>
</feature>
<feature type="compositionally biased region" description="Polar residues" evidence="2">
    <location>
        <begin position="506"/>
        <end position="517"/>
    </location>
</feature>
<feature type="modified residue" description="N-acetylmethionine" evidence="14">
    <location>
        <position position="1"/>
    </location>
</feature>
<feature type="modified residue" description="Phosphothreonine" evidence="13">
    <location>
        <position position="11"/>
    </location>
</feature>
<feature type="modified residue" description="Phosphothreonine" evidence="13">
    <location>
        <position position="499"/>
    </location>
</feature>
<feature type="modified residue" description="Phosphoserine" evidence="15">
    <location>
        <position position="517"/>
    </location>
</feature>
<feature type="modified residue" description="Phosphoserine" evidence="15">
    <location>
        <position position="743"/>
    </location>
</feature>
<feature type="splice variant" id="VSP_056097" description="In isoform 2." evidence="10">
    <location>
        <begin position="1"/>
        <end position="568"/>
    </location>
</feature>
<feature type="sequence variant" id="VAR_077031" description="In SNDC; dbSNP:rs762388639." evidence="7">
    <original>W</original>
    <variation>L</variation>
    <location>
        <position position="424"/>
    </location>
</feature>
<feature type="sequence variant" id="VAR_077032" description="In SNDC; dbSNP:rs749094914." evidence="7">
    <original>A</original>
    <variation>S</variation>
    <location>
        <position position="582"/>
    </location>
</feature>
<feature type="sequence variant" id="VAR_077033" description="In SNDC; dbSNP:rs879255645." evidence="7">
    <original>S</original>
    <variation>L</variation>
    <location>
        <position position="583"/>
    </location>
</feature>
<feature type="mutagenesis site" description="Reduces interaction with NOS1." evidence="4">
    <original>G</original>
    <variation>A</variation>
    <location>
        <position position="773"/>
    </location>
</feature>
<feature type="mutagenesis site" description="Reduces interaction with NOS1." evidence="4">
    <original>D</original>
    <variation>A</variation>
    <location>
        <position position="774"/>
    </location>
</feature>
<feature type="mutagenesis site" description="Reduces interaction with NOS1." evidence="4">
    <original>L</original>
    <variation>A</variation>
    <location>
        <position position="776"/>
    </location>
</feature>
<feature type="mutagenesis site" description="Abolishes interaction with NOS1." evidence="4">
    <original>D</original>
    <variation>A</variation>
    <location>
        <position position="777"/>
    </location>
</feature>
<feature type="mutagenesis site" description="Reduces interaction with NOS1." evidence="4">
    <original>VVL</original>
    <variation>AAA</variation>
    <location>
        <begin position="780"/>
        <end position="782"/>
    </location>
</feature>
<feature type="mutagenesis site" description="Reduces interaction with NOS1." evidence="4">
    <original>L</original>
    <variation>G</variation>
    <location>
        <position position="782"/>
    </location>
</feature>
<feature type="sequence conflict" description="In Ref. 4; AAB03813." evidence="11" ref="4">
    <original>A</original>
    <variation>P</variation>
    <location>
        <position position="257"/>
    </location>
</feature>
<feature type="sequence conflict" description="In Ref. 4; AAB03813." evidence="11" ref="4">
    <original>L</original>
    <variation>P</variation>
    <location>
        <position position="263"/>
    </location>
</feature>
<feature type="sequence conflict" description="In Ref. 5; CAG33624." evidence="11" ref="5">
    <original>T</original>
    <variation>A</variation>
    <location>
        <position position="352"/>
    </location>
</feature>
<keyword id="KW-0002">3D-structure</keyword>
<keyword id="KW-0007">Acetylation</keyword>
<keyword id="KW-0025">Alternative splicing</keyword>
<keyword id="KW-0225">Disease variant</keyword>
<keyword id="KW-0256">Endoplasmic reticulum</keyword>
<keyword id="KW-0967">Endosome</keyword>
<keyword id="KW-0945">Host-virus interaction</keyword>
<keyword id="KW-0472">Membrane</keyword>
<keyword id="KW-0492">Microsome</keyword>
<keyword id="KW-0523">Neurodegeneration</keyword>
<keyword id="KW-0597">Phosphoprotein</keyword>
<keyword id="KW-1267">Proteomics identification</keyword>
<keyword id="KW-1185">Reference proteome</keyword>
<keyword id="KW-0677">Repeat</keyword>
<name>VAC14_HUMAN</name>
<dbReference type="EMBL" id="AK025479">
    <property type="protein sequence ID" value="BAB15145.1"/>
    <property type="status" value="ALT_INIT"/>
    <property type="molecule type" value="mRNA"/>
</dbReference>
<dbReference type="EMBL" id="AK056433">
    <property type="protein sequence ID" value="BAG51707.1"/>
    <property type="molecule type" value="mRNA"/>
</dbReference>
<dbReference type="EMBL" id="AK093941">
    <property type="protein sequence ID" value="BAG52790.1"/>
    <property type="molecule type" value="mRNA"/>
</dbReference>
<dbReference type="EMBL" id="AC020763">
    <property type="status" value="NOT_ANNOTATED_CDS"/>
    <property type="molecule type" value="Genomic_DNA"/>
</dbReference>
<dbReference type="EMBL" id="AC027281">
    <property type="status" value="NOT_ANNOTATED_CDS"/>
    <property type="molecule type" value="Genomic_DNA"/>
</dbReference>
<dbReference type="EMBL" id="BC000536">
    <property type="protein sequence ID" value="AAH00536.2"/>
    <property type="molecule type" value="mRNA"/>
</dbReference>
<dbReference type="EMBL" id="BC007214">
    <property type="protein sequence ID" value="AAH07214.2"/>
    <property type="molecule type" value="mRNA"/>
</dbReference>
<dbReference type="EMBL" id="BC125108">
    <property type="protein sequence ID" value="AAI25109.1"/>
    <property type="molecule type" value="mRNA"/>
</dbReference>
<dbReference type="EMBL" id="BC125109">
    <property type="protein sequence ID" value="AAI25110.1"/>
    <property type="molecule type" value="mRNA"/>
</dbReference>
<dbReference type="EMBL" id="U25801">
    <property type="protein sequence ID" value="AAB03813.1"/>
    <property type="status" value="ALT_SEQ"/>
    <property type="molecule type" value="mRNA"/>
</dbReference>
<dbReference type="EMBL" id="CR457343">
    <property type="protein sequence ID" value="CAG33624.1"/>
    <property type="molecule type" value="mRNA"/>
</dbReference>
<dbReference type="CCDS" id="CCDS10896.1">
    <molecule id="Q08AM6-1"/>
</dbReference>
<dbReference type="PIR" id="S68091">
    <property type="entry name" value="S68091"/>
</dbReference>
<dbReference type="RefSeq" id="NP_060522.3">
    <molecule id="Q08AM6-1"/>
    <property type="nucleotide sequence ID" value="NM_018052.3"/>
</dbReference>
<dbReference type="PDB" id="7K1Y">
    <property type="method" value="EM"/>
    <property type="resolution" value="5.25 A"/>
    <property type="chains" value="B/D/E/G=1-782"/>
</dbReference>
<dbReference type="PDBsum" id="7K1Y"/>
<dbReference type="EMDB" id="EMD-22634"/>
<dbReference type="BioGRID" id="120822">
    <property type="interactions" value="220"/>
</dbReference>
<dbReference type="CORUM" id="Q08AM6"/>
<dbReference type="FunCoup" id="Q08AM6">
    <property type="interactions" value="3271"/>
</dbReference>
<dbReference type="IntAct" id="Q08AM6">
    <property type="interactions" value="167"/>
</dbReference>
<dbReference type="MINT" id="Q08AM6"/>
<dbReference type="STRING" id="9606.ENSP00000261776"/>
<dbReference type="GlyGen" id="Q08AM6">
    <property type="glycosylation" value="1 site, 1 O-linked glycan (1 site)"/>
</dbReference>
<dbReference type="iPTMnet" id="Q08AM6"/>
<dbReference type="MetOSite" id="Q08AM6"/>
<dbReference type="PhosphoSitePlus" id="Q08AM6"/>
<dbReference type="SwissPalm" id="Q08AM6"/>
<dbReference type="BioMuta" id="VAC14"/>
<dbReference type="DMDM" id="121940040"/>
<dbReference type="jPOST" id="Q08AM6"/>
<dbReference type="MassIVE" id="Q08AM6"/>
<dbReference type="PaxDb" id="9606-ENSP00000261776"/>
<dbReference type="PeptideAtlas" id="Q08AM6"/>
<dbReference type="ProteomicsDB" id="3649"/>
<dbReference type="ProteomicsDB" id="58681">
    <molecule id="Q08AM6-1"/>
</dbReference>
<dbReference type="Pumba" id="Q08AM6"/>
<dbReference type="Antibodypedia" id="16467">
    <property type="antibodies" value="96 antibodies from 22 providers"/>
</dbReference>
<dbReference type="DNASU" id="55697"/>
<dbReference type="Ensembl" id="ENST00000261776.10">
    <molecule id="Q08AM6-1"/>
    <property type="protein sequence ID" value="ENSP00000261776.5"/>
    <property type="gene ID" value="ENSG00000103043.15"/>
</dbReference>
<dbReference type="Ensembl" id="ENST00000536184.6">
    <molecule id="Q08AM6-2"/>
    <property type="protein sequence ID" value="ENSP00000439284.2"/>
    <property type="gene ID" value="ENSG00000103043.15"/>
</dbReference>
<dbReference type="GeneID" id="55697"/>
<dbReference type="KEGG" id="hsa:55697"/>
<dbReference type="MANE-Select" id="ENST00000261776.10">
    <property type="protein sequence ID" value="ENSP00000261776.5"/>
    <property type="RefSeq nucleotide sequence ID" value="NM_018052.5"/>
    <property type="RefSeq protein sequence ID" value="NP_060522.3"/>
</dbReference>
<dbReference type="UCSC" id="uc002ezm.4">
    <molecule id="Q08AM6-1"/>
    <property type="organism name" value="human"/>
</dbReference>
<dbReference type="AGR" id="HGNC:25507"/>
<dbReference type="CTD" id="55697"/>
<dbReference type="DisGeNET" id="55697"/>
<dbReference type="GeneCards" id="VAC14"/>
<dbReference type="HGNC" id="HGNC:25507">
    <property type="gene designation" value="VAC14"/>
</dbReference>
<dbReference type="HPA" id="ENSG00000103043">
    <property type="expression patterns" value="Low tissue specificity"/>
</dbReference>
<dbReference type="MalaCards" id="VAC14"/>
<dbReference type="MIM" id="604632">
    <property type="type" value="gene"/>
</dbReference>
<dbReference type="MIM" id="617054">
    <property type="type" value="phenotype"/>
</dbReference>
<dbReference type="neXtProt" id="NX_Q08AM6"/>
<dbReference type="OpenTargets" id="ENSG00000103043"/>
<dbReference type="Orphanet" id="497906">
    <property type="disease" value="Childhood-onset basal ganglia degeneration syndrome"/>
</dbReference>
<dbReference type="Orphanet" id="3472">
    <property type="disease" value="Yunis-Varon syndrome"/>
</dbReference>
<dbReference type="PharmGKB" id="PA142670633"/>
<dbReference type="VEuPathDB" id="HostDB:ENSG00000103043"/>
<dbReference type="eggNOG" id="KOG0212">
    <property type="taxonomic scope" value="Eukaryota"/>
</dbReference>
<dbReference type="GeneTree" id="ENSGT00390000008385"/>
<dbReference type="HOGENOM" id="CLU_007740_1_0_1"/>
<dbReference type="InParanoid" id="Q08AM6"/>
<dbReference type="OMA" id="QCYQHVS"/>
<dbReference type="OrthoDB" id="5574975at2759"/>
<dbReference type="PAN-GO" id="Q08AM6">
    <property type="GO annotations" value="5 GO annotations based on evolutionary models"/>
</dbReference>
<dbReference type="PhylomeDB" id="Q08AM6"/>
<dbReference type="TreeFam" id="TF343690"/>
<dbReference type="BioCyc" id="MetaCyc:ENSG00000103043-MONOMER"/>
<dbReference type="PathwayCommons" id="Q08AM6"/>
<dbReference type="Reactome" id="R-HSA-1660514">
    <property type="pathway name" value="Synthesis of PIPs at the Golgi membrane"/>
</dbReference>
<dbReference type="Reactome" id="R-HSA-1660516">
    <property type="pathway name" value="Synthesis of PIPs at the early endosome membrane"/>
</dbReference>
<dbReference type="Reactome" id="R-HSA-1660517">
    <property type="pathway name" value="Synthesis of PIPs at the late endosome membrane"/>
</dbReference>
<dbReference type="SignaLink" id="Q08AM6"/>
<dbReference type="SIGNOR" id="Q08AM6"/>
<dbReference type="BioGRID-ORCS" id="55697">
    <property type="hits" value="80 hits in 1169 CRISPR screens"/>
</dbReference>
<dbReference type="CD-CODE" id="8C2F96ED">
    <property type="entry name" value="Centrosome"/>
</dbReference>
<dbReference type="CD-CODE" id="FB4E32DD">
    <property type="entry name" value="Presynaptic clusters and postsynaptic densities"/>
</dbReference>
<dbReference type="ChiTaRS" id="VAC14">
    <property type="organism name" value="human"/>
</dbReference>
<dbReference type="GeneWiki" id="VAC14"/>
<dbReference type="GenomeRNAi" id="55697"/>
<dbReference type="Pharos" id="Q08AM6">
    <property type="development level" value="Tbio"/>
</dbReference>
<dbReference type="PRO" id="PR:Q08AM6"/>
<dbReference type="Proteomes" id="UP000005640">
    <property type="component" value="Chromosome 16"/>
</dbReference>
<dbReference type="RNAct" id="Q08AM6">
    <property type="molecule type" value="protein"/>
</dbReference>
<dbReference type="Bgee" id="ENSG00000103043">
    <property type="expression patterns" value="Expressed in stromal cell of endometrium and 151 other cell types or tissues"/>
</dbReference>
<dbReference type="ExpressionAtlas" id="Q08AM6">
    <property type="expression patterns" value="baseline and differential"/>
</dbReference>
<dbReference type="GO" id="GO:0005829">
    <property type="term" value="C:cytosol"/>
    <property type="evidence" value="ECO:0000314"/>
    <property type="project" value="HPA"/>
</dbReference>
<dbReference type="GO" id="GO:0031901">
    <property type="term" value="C:early endosome membrane"/>
    <property type="evidence" value="ECO:0000304"/>
    <property type="project" value="Reactome"/>
</dbReference>
<dbReference type="GO" id="GO:0005783">
    <property type="term" value="C:endoplasmic reticulum"/>
    <property type="evidence" value="ECO:0007669"/>
    <property type="project" value="UniProtKB-KW"/>
</dbReference>
<dbReference type="GO" id="GO:0010008">
    <property type="term" value="C:endosome membrane"/>
    <property type="evidence" value="ECO:0000314"/>
    <property type="project" value="UniProtKB"/>
</dbReference>
<dbReference type="GO" id="GO:0000139">
    <property type="term" value="C:Golgi membrane"/>
    <property type="evidence" value="ECO:0000304"/>
    <property type="project" value="Reactome"/>
</dbReference>
<dbReference type="GO" id="GO:0043231">
    <property type="term" value="C:intracellular membrane-bounded organelle"/>
    <property type="evidence" value="ECO:0000314"/>
    <property type="project" value="HPA"/>
</dbReference>
<dbReference type="GO" id="GO:0031902">
    <property type="term" value="C:late endosome membrane"/>
    <property type="evidence" value="ECO:0000304"/>
    <property type="project" value="Reactome"/>
</dbReference>
<dbReference type="GO" id="GO:0070772">
    <property type="term" value="C:PAS complex"/>
    <property type="evidence" value="ECO:0000318"/>
    <property type="project" value="GO_Central"/>
</dbReference>
<dbReference type="GO" id="GO:0098830">
    <property type="term" value="C:presynaptic endosome"/>
    <property type="evidence" value="ECO:0007669"/>
    <property type="project" value="Ensembl"/>
</dbReference>
<dbReference type="GO" id="GO:0042802">
    <property type="term" value="F:identical protein binding"/>
    <property type="evidence" value="ECO:0000353"/>
    <property type="project" value="IntAct"/>
</dbReference>
<dbReference type="GO" id="GO:0038023">
    <property type="term" value="F:signaling receptor activity"/>
    <property type="evidence" value="ECO:0000303"/>
    <property type="project" value="UniProtKB"/>
</dbReference>
<dbReference type="GO" id="GO:0006661">
    <property type="term" value="P:phosphatidylinositol biosynthetic process"/>
    <property type="evidence" value="ECO:0000318"/>
    <property type="project" value="GO_Central"/>
</dbReference>
<dbReference type="GO" id="GO:0099149">
    <property type="term" value="P:regulation of postsynaptic neurotransmitter receptor internalization"/>
    <property type="evidence" value="ECO:0007669"/>
    <property type="project" value="Ensembl"/>
</dbReference>
<dbReference type="GO" id="GO:0007165">
    <property type="term" value="P:signal transduction"/>
    <property type="evidence" value="ECO:0000303"/>
    <property type="project" value="UniProtKB"/>
</dbReference>
<dbReference type="FunFam" id="1.25.10.10:FF:000631">
    <property type="entry name" value="Vac14, PIKFYVE complex component"/>
    <property type="match status" value="1"/>
</dbReference>
<dbReference type="Gene3D" id="1.25.10.10">
    <property type="entry name" value="Leucine-rich Repeat Variant"/>
    <property type="match status" value="2"/>
</dbReference>
<dbReference type="InterPro" id="IPR011989">
    <property type="entry name" value="ARM-like"/>
</dbReference>
<dbReference type="InterPro" id="IPR016024">
    <property type="entry name" value="ARM-type_fold"/>
</dbReference>
<dbReference type="InterPro" id="IPR026825">
    <property type="entry name" value="Vac14"/>
</dbReference>
<dbReference type="InterPro" id="IPR021841">
    <property type="entry name" value="VAC14_Fig4p-bd"/>
</dbReference>
<dbReference type="PANTHER" id="PTHR16023:SF0">
    <property type="entry name" value="PROTEIN VAC14 HOMOLOG"/>
    <property type="match status" value="1"/>
</dbReference>
<dbReference type="PANTHER" id="PTHR16023">
    <property type="entry name" value="TAX1 BINDING PROTEIN-RELATED"/>
    <property type="match status" value="1"/>
</dbReference>
<dbReference type="Pfam" id="PF12755">
    <property type="entry name" value="Vac14_Fab1_bd"/>
    <property type="match status" value="1"/>
</dbReference>
<dbReference type="Pfam" id="PF11916">
    <property type="entry name" value="Vac14_Fig4_bd"/>
    <property type="match status" value="1"/>
</dbReference>
<dbReference type="SUPFAM" id="SSF48371">
    <property type="entry name" value="ARM repeat"/>
    <property type="match status" value="1"/>
</dbReference>
<organism>
    <name type="scientific">Homo sapiens</name>
    <name type="common">Human</name>
    <dbReference type="NCBI Taxonomy" id="9606"/>
    <lineage>
        <taxon>Eukaryota</taxon>
        <taxon>Metazoa</taxon>
        <taxon>Chordata</taxon>
        <taxon>Craniata</taxon>
        <taxon>Vertebrata</taxon>
        <taxon>Euteleostomi</taxon>
        <taxon>Mammalia</taxon>
        <taxon>Eutheria</taxon>
        <taxon>Euarchontoglires</taxon>
        <taxon>Primates</taxon>
        <taxon>Haplorrhini</taxon>
        <taxon>Catarrhini</taxon>
        <taxon>Hominidae</taxon>
        <taxon>Homo</taxon>
    </lineage>
</organism>
<protein>
    <recommendedName>
        <fullName>Protein VAC14 homolog</fullName>
    </recommendedName>
    <alternativeName>
        <fullName>Tax1-binding protein 2</fullName>
    </alternativeName>
</protein>
<gene>
    <name type="primary">VAC14</name>
    <name type="synonym">TAX1BP2</name>
    <name type="synonym">TRX</name>
</gene>